<name>FIGLA_HUMAN</name>
<proteinExistence type="evidence at protein level"/>
<dbReference type="EMBL" id="AY541030">
    <property type="protein sequence ID" value="AAS48452.1"/>
    <property type="molecule type" value="mRNA"/>
</dbReference>
<dbReference type="EMBL" id="AC007395">
    <property type="status" value="NOT_ANNOTATED_CDS"/>
    <property type="molecule type" value="Genomic_DNA"/>
</dbReference>
<dbReference type="EMBL" id="BC039536">
    <property type="status" value="NOT_ANNOTATED_CDS"/>
    <property type="molecule type" value="mRNA"/>
</dbReference>
<dbReference type="CCDS" id="CCDS46320.1"/>
<dbReference type="RefSeq" id="NP_001004311.2">
    <property type="nucleotide sequence ID" value="NM_001004311.3"/>
</dbReference>
<dbReference type="SMR" id="Q6QHK4"/>
<dbReference type="BioGRID" id="131285">
    <property type="interactions" value="16"/>
</dbReference>
<dbReference type="FunCoup" id="Q6QHK4">
    <property type="interactions" value="160"/>
</dbReference>
<dbReference type="IntAct" id="Q6QHK4">
    <property type="interactions" value="16"/>
</dbReference>
<dbReference type="STRING" id="9606.ENSP00000333097"/>
<dbReference type="iPTMnet" id="Q6QHK4"/>
<dbReference type="PhosphoSitePlus" id="Q6QHK4"/>
<dbReference type="BioMuta" id="FIGLA"/>
<dbReference type="DMDM" id="296434505"/>
<dbReference type="MassIVE" id="Q6QHK4"/>
<dbReference type="PaxDb" id="9606-ENSP00000333097"/>
<dbReference type="PeptideAtlas" id="Q6QHK4"/>
<dbReference type="Antibodypedia" id="31154">
    <property type="antibodies" value="85 antibodies from 19 providers"/>
</dbReference>
<dbReference type="DNASU" id="344018"/>
<dbReference type="Ensembl" id="ENST00000332372.6">
    <property type="protein sequence ID" value="ENSP00000333097.6"/>
    <property type="gene ID" value="ENSG00000183733.6"/>
</dbReference>
<dbReference type="GeneID" id="344018"/>
<dbReference type="KEGG" id="hsa:344018"/>
<dbReference type="MANE-Select" id="ENST00000332372.6">
    <property type="protein sequence ID" value="ENSP00000333097.6"/>
    <property type="RefSeq nucleotide sequence ID" value="NM_001004311.3"/>
    <property type="RefSeq protein sequence ID" value="NP_001004311.2"/>
</dbReference>
<dbReference type="UCSC" id="uc002she.1">
    <property type="organism name" value="human"/>
</dbReference>
<dbReference type="AGR" id="HGNC:24669"/>
<dbReference type="CTD" id="344018"/>
<dbReference type="DisGeNET" id="344018"/>
<dbReference type="GeneCards" id="FIGLA"/>
<dbReference type="HGNC" id="HGNC:24669">
    <property type="gene designation" value="FIGLA"/>
</dbReference>
<dbReference type="HPA" id="ENSG00000183733">
    <property type="expression patterns" value="Tissue enhanced (ovary, retina)"/>
</dbReference>
<dbReference type="MalaCards" id="FIGLA"/>
<dbReference type="MIM" id="608697">
    <property type="type" value="gene"/>
</dbReference>
<dbReference type="MIM" id="612310">
    <property type="type" value="phenotype"/>
</dbReference>
<dbReference type="neXtProt" id="NX_Q6QHK4"/>
<dbReference type="OpenTargets" id="ENSG00000183733"/>
<dbReference type="PharmGKB" id="PA145008379"/>
<dbReference type="VEuPathDB" id="HostDB:ENSG00000183733"/>
<dbReference type="eggNOG" id="KOG4029">
    <property type="taxonomic scope" value="Eukaryota"/>
</dbReference>
<dbReference type="GeneTree" id="ENSGT00440000033552"/>
<dbReference type="HOGENOM" id="CLU_1380972_0_0_1"/>
<dbReference type="InParanoid" id="Q6QHK4"/>
<dbReference type="OMA" id="PDKQNYS"/>
<dbReference type="OrthoDB" id="5976910at2759"/>
<dbReference type="PAN-GO" id="Q6QHK4">
    <property type="GO annotations" value="4 GO annotations based on evolutionary models"/>
</dbReference>
<dbReference type="PhylomeDB" id="Q6QHK4"/>
<dbReference type="TreeFam" id="TF351992"/>
<dbReference type="PathwayCommons" id="Q6QHK4"/>
<dbReference type="SignaLink" id="Q6QHK4"/>
<dbReference type="BioGRID-ORCS" id="344018">
    <property type="hits" value="11 hits in 1167 CRISPR screens"/>
</dbReference>
<dbReference type="GeneWiki" id="FIGLA"/>
<dbReference type="GenomeRNAi" id="344018"/>
<dbReference type="Pharos" id="Q6QHK4">
    <property type="development level" value="Tbio"/>
</dbReference>
<dbReference type="PRO" id="PR:Q6QHK4"/>
<dbReference type="Proteomes" id="UP000005640">
    <property type="component" value="Chromosome 2"/>
</dbReference>
<dbReference type="RNAct" id="Q6QHK4">
    <property type="molecule type" value="protein"/>
</dbReference>
<dbReference type="Bgee" id="ENSG00000183733">
    <property type="expression patterns" value="Expressed in oocyte and 59 other cell types or tissues"/>
</dbReference>
<dbReference type="GO" id="GO:0000785">
    <property type="term" value="C:chromatin"/>
    <property type="evidence" value="ECO:0000247"/>
    <property type="project" value="NTNU_SB"/>
</dbReference>
<dbReference type="GO" id="GO:0005634">
    <property type="term" value="C:nucleus"/>
    <property type="evidence" value="ECO:0007669"/>
    <property type="project" value="UniProtKB-SubCell"/>
</dbReference>
<dbReference type="GO" id="GO:0005667">
    <property type="term" value="C:transcription regulator complex"/>
    <property type="evidence" value="ECO:0000314"/>
    <property type="project" value="UniProtKB"/>
</dbReference>
<dbReference type="GO" id="GO:0043425">
    <property type="term" value="F:bHLH transcription factor binding"/>
    <property type="evidence" value="ECO:0000353"/>
    <property type="project" value="UniProtKB"/>
</dbReference>
<dbReference type="GO" id="GO:0001228">
    <property type="term" value="F:DNA-binding transcription activator activity, RNA polymerase II-specific"/>
    <property type="evidence" value="ECO:0007669"/>
    <property type="project" value="Ensembl"/>
</dbReference>
<dbReference type="GO" id="GO:0000981">
    <property type="term" value="F:DNA-binding transcription factor activity, RNA polymerase II-specific"/>
    <property type="evidence" value="ECO:0000247"/>
    <property type="project" value="NTNU_SB"/>
</dbReference>
<dbReference type="GO" id="GO:0046983">
    <property type="term" value="F:protein dimerization activity"/>
    <property type="evidence" value="ECO:0007669"/>
    <property type="project" value="InterPro"/>
</dbReference>
<dbReference type="GO" id="GO:0000978">
    <property type="term" value="F:RNA polymerase II cis-regulatory region sequence-specific DNA binding"/>
    <property type="evidence" value="ECO:0007669"/>
    <property type="project" value="Ensembl"/>
</dbReference>
<dbReference type="GO" id="GO:0000977">
    <property type="term" value="F:RNA polymerase II transcription regulatory region sequence-specific DNA binding"/>
    <property type="evidence" value="ECO:0000318"/>
    <property type="project" value="GO_Central"/>
</dbReference>
<dbReference type="GO" id="GO:1990837">
    <property type="term" value="F:sequence-specific double-stranded DNA binding"/>
    <property type="evidence" value="ECO:0000314"/>
    <property type="project" value="ARUK-UCL"/>
</dbReference>
<dbReference type="GO" id="GO:0032502">
    <property type="term" value="P:developmental process"/>
    <property type="evidence" value="ECO:0000318"/>
    <property type="project" value="GO_Central"/>
</dbReference>
<dbReference type="GO" id="GO:0048599">
    <property type="term" value="P:oocyte development"/>
    <property type="evidence" value="ECO:0000303"/>
    <property type="project" value="UniProtKB"/>
</dbReference>
<dbReference type="GO" id="GO:0006357">
    <property type="term" value="P:regulation of transcription by RNA polymerase II"/>
    <property type="evidence" value="ECO:0000318"/>
    <property type="project" value="GO_Central"/>
</dbReference>
<dbReference type="CDD" id="cd11422">
    <property type="entry name" value="bHLH_TS_FIGLA"/>
    <property type="match status" value="1"/>
</dbReference>
<dbReference type="FunFam" id="4.10.280.10:FF:000068">
    <property type="entry name" value="factor in the germline alpha"/>
    <property type="match status" value="1"/>
</dbReference>
<dbReference type="Gene3D" id="4.10.280.10">
    <property type="entry name" value="Helix-loop-helix DNA-binding domain"/>
    <property type="match status" value="1"/>
</dbReference>
<dbReference type="InterPro" id="IPR011598">
    <property type="entry name" value="bHLH_dom"/>
</dbReference>
<dbReference type="InterPro" id="IPR050283">
    <property type="entry name" value="E-box_TF_Regulators"/>
</dbReference>
<dbReference type="InterPro" id="IPR036638">
    <property type="entry name" value="HLH_DNA-bd_sf"/>
</dbReference>
<dbReference type="PANTHER" id="PTHR23349">
    <property type="entry name" value="BASIC HELIX-LOOP-HELIX TRANSCRIPTION FACTOR, TWIST"/>
    <property type="match status" value="1"/>
</dbReference>
<dbReference type="PANTHER" id="PTHR23349:SF57">
    <property type="entry name" value="FACTOR IN THE GERMLINE ALPHA"/>
    <property type="match status" value="1"/>
</dbReference>
<dbReference type="Pfam" id="PF00010">
    <property type="entry name" value="HLH"/>
    <property type="match status" value="1"/>
</dbReference>
<dbReference type="SMART" id="SM00353">
    <property type="entry name" value="HLH"/>
    <property type="match status" value="1"/>
</dbReference>
<dbReference type="SUPFAM" id="SSF47459">
    <property type="entry name" value="HLH, helix-loop-helix DNA-binding domain"/>
    <property type="match status" value="1"/>
</dbReference>
<dbReference type="PROSITE" id="PS50888">
    <property type="entry name" value="BHLH"/>
    <property type="match status" value="1"/>
</dbReference>
<keyword id="KW-0217">Developmental protein</keyword>
<keyword id="KW-0221">Differentiation</keyword>
<keyword id="KW-0238">DNA-binding</keyword>
<keyword id="KW-0539">Nucleus</keyword>
<keyword id="KW-0896">Oogenesis</keyword>
<keyword id="KW-1066">Premature ovarian failure</keyword>
<keyword id="KW-1185">Reference proteome</keyword>
<keyword id="KW-0804">Transcription</keyword>
<keyword id="KW-0805">Transcription regulation</keyword>
<comment type="function">
    <text evidence="4">Germline specific transcription factor implicated in postnatal oocyte-specific gene expression. Plays a key regulatory role in the expression of multiple oocyte-specific genes, including those that initiate folliculogenesis and those that encode the zona pellucida (ZP1, ZP2 and ZP3) required for fertilization and early embryonic survival. Essential for oocytes to survive and form primordial follicles. The persistence of FIGLA in adult females suggests that it may regulate additional pathways that are essential for normal ovarian development. Binds to the E-box (5'-CANNTG-3') of the ZPs (ZP1, ZP2, ZP3) promoters.</text>
</comment>
<comment type="subunit">
    <text>Heterodimer with TCF3/isoform E12.</text>
</comment>
<comment type="interaction">
    <interactant intactId="EBI-11976617">
        <id>Q6QHK4</id>
    </interactant>
    <interactant intactId="EBI-12039345">
        <id>Q9UBR4-2</id>
        <label>LHX3</label>
    </interactant>
    <organismsDiffer>false</organismsDiffer>
    <experiments>5</experiments>
</comment>
<comment type="interaction">
    <interactant intactId="EBI-11976617">
        <id>Q6QHK4</id>
    </interactant>
    <interactant intactId="EBI-10258746">
        <id>Q9UPM6</id>
        <label>LHX6</label>
    </interactant>
    <organismsDiffer>false</organismsDiffer>
    <experiments>3</experiments>
</comment>
<comment type="interaction">
    <interactant intactId="EBI-11976617">
        <id>Q6QHK4</id>
    </interactant>
    <interactant intactId="EBI-8474075">
        <id>Q68G74</id>
        <label>LHX8</label>
    </interactant>
    <organismsDiffer>false</organismsDiffer>
    <experiments>9</experiments>
</comment>
<comment type="interaction">
    <interactant intactId="EBI-11976617">
        <id>Q6QHK4</id>
    </interactant>
    <interactant intactId="EBI-17491620">
        <id>P13349</id>
        <label>MYF5</label>
    </interactant>
    <organismsDiffer>false</organismsDiffer>
    <experiments>3</experiments>
</comment>
<comment type="interaction">
    <interactant intactId="EBI-11976617">
        <id>Q6QHK4</id>
    </interactant>
    <interactant intactId="EBI-488878">
        <id>P15172</id>
        <label>MYOD1</label>
    </interactant>
    <organismsDiffer>false</organismsDiffer>
    <experiments>3</experiments>
</comment>
<comment type="interaction">
    <interactant intactId="EBI-11976617">
        <id>Q6QHK4</id>
    </interactant>
    <interactant intactId="EBI-3906629">
        <id>P15173</id>
        <label>MYOG</label>
    </interactant>
    <organismsDiffer>false</organismsDiffer>
    <experiments>5</experiments>
</comment>
<comment type="interaction">
    <interactant intactId="EBI-11976617">
        <id>Q6QHK4</id>
    </interactant>
    <interactant intactId="EBI-11952764">
        <id>Q99081-3</id>
        <label>TCF12</label>
    </interactant>
    <organismsDiffer>false</organismsDiffer>
    <experiments>3</experiments>
</comment>
<comment type="interaction">
    <interactant intactId="EBI-11976617">
        <id>Q6QHK4</id>
    </interactant>
    <interactant intactId="EBI-12127592">
        <id>Q7RTU1</id>
        <label>TCF23</label>
    </interactant>
    <organismsDiffer>false</organismsDiffer>
    <experiments>3</experiments>
</comment>
<comment type="interaction">
    <interactant intactId="EBI-11976617">
        <id>Q6QHK4</id>
    </interactant>
    <interactant intactId="EBI-13636688">
        <id>P15884-3</id>
        <label>TCF4</label>
    </interactant>
    <organismsDiffer>false</organismsDiffer>
    <experiments>3</experiments>
</comment>
<comment type="subcellular location">
    <subcellularLocation>
        <location evidence="7">Nucleus</location>
    </subcellularLocation>
</comment>
<comment type="tissue specificity">
    <text evidence="3 4">Germ cells. Expressed in the fetal ovary, but not by a range of other tissues. Expression increases across mid-gestation, rising some 40-fold by the time of primordial follicle formation.</text>
</comment>
<comment type="developmental stage">
    <text evidence="3">Expressed in ovarian follicles (from the primordial through to the secondary stage), in mature oocytes, and less frequently in preimplantation embryos.</text>
</comment>
<comment type="disease" evidence="6">
    <disease id="DI-02196">
        <name>Premature ovarian failure 6</name>
        <acronym>POF6</acronym>
        <description>An ovarian disorder defined as the cessation of ovarian function under the age of 40 years. It is characterized by oligomenorrhea or amenorrhea, in the presence of elevated levels of serum gonadotropins and low estradiol.</description>
        <dbReference type="MIM" id="612310"/>
    </disease>
    <text>The disease is caused by variants affecting the gene represented in this entry.</text>
</comment>
<reference key="1">
    <citation type="journal article" date="2004" name="Mol. Hum. Reprod.">
        <title>Increased expression of the FIGLA transcription factor is associated with primordial follicle formation in the human fetal ovary.</title>
        <authorList>
            <person name="Bayne R.A.L."/>
            <person name="Martins da Silva S.J."/>
            <person name="Anderson R.A."/>
        </authorList>
    </citation>
    <scope>NUCLEOTIDE SEQUENCE [MRNA]</scope>
    <scope>FUNCTION</scope>
    <scope>TISSUE SPECIFICITY</scope>
    <scope>INTERACTION WITH TCF3/E12</scope>
    <scope>VARIANT THR-141</scope>
</reference>
<reference key="2">
    <citation type="journal article" date="2002" name="Mol. Hum. Reprod.">
        <title>Isolation, characterization and expression of the human Factor In the Germline alpha (FIGLA) gene in ovarian follicles and oocytes.</title>
        <authorList>
            <person name="Huntriss J."/>
            <person name="Gosden R."/>
            <person name="Hinkins M."/>
            <person name="Oliver B."/>
            <person name="Miller D."/>
            <person name="Rutherford A.J."/>
            <person name="Picton H.M."/>
        </authorList>
    </citation>
    <scope>NUCLEOTIDE SEQUENCE [MRNA]</scope>
    <scope>TISSUE SPECIFICITY</scope>
    <scope>DEVELOPMENTAL STAGE</scope>
</reference>
<reference key="3">
    <citation type="journal article" date="2005" name="Nature">
        <title>Generation and annotation of the DNA sequences of human chromosomes 2 and 4.</title>
        <authorList>
            <person name="Hillier L.W."/>
            <person name="Graves T.A."/>
            <person name="Fulton R.S."/>
            <person name="Fulton L.A."/>
            <person name="Pepin K.H."/>
            <person name="Minx P."/>
            <person name="Wagner-McPherson C."/>
            <person name="Layman D."/>
            <person name="Wylie K."/>
            <person name="Sekhon M."/>
            <person name="Becker M.C."/>
            <person name="Fewell G.A."/>
            <person name="Delehaunty K.D."/>
            <person name="Miner T.L."/>
            <person name="Nash W.E."/>
            <person name="Kremitzki C."/>
            <person name="Oddy L."/>
            <person name="Du H."/>
            <person name="Sun H."/>
            <person name="Bradshaw-Cordum H."/>
            <person name="Ali J."/>
            <person name="Carter J."/>
            <person name="Cordes M."/>
            <person name="Harris A."/>
            <person name="Isak A."/>
            <person name="van Brunt A."/>
            <person name="Nguyen C."/>
            <person name="Du F."/>
            <person name="Courtney L."/>
            <person name="Kalicki J."/>
            <person name="Ozersky P."/>
            <person name="Abbott S."/>
            <person name="Armstrong J."/>
            <person name="Belter E.A."/>
            <person name="Caruso L."/>
            <person name="Cedroni M."/>
            <person name="Cotton M."/>
            <person name="Davidson T."/>
            <person name="Desai A."/>
            <person name="Elliott G."/>
            <person name="Erb T."/>
            <person name="Fronick C."/>
            <person name="Gaige T."/>
            <person name="Haakenson W."/>
            <person name="Haglund K."/>
            <person name="Holmes A."/>
            <person name="Harkins R."/>
            <person name="Kim K."/>
            <person name="Kruchowski S.S."/>
            <person name="Strong C.M."/>
            <person name="Grewal N."/>
            <person name="Goyea E."/>
            <person name="Hou S."/>
            <person name="Levy A."/>
            <person name="Martinka S."/>
            <person name="Mead K."/>
            <person name="McLellan M.D."/>
            <person name="Meyer R."/>
            <person name="Randall-Maher J."/>
            <person name="Tomlinson C."/>
            <person name="Dauphin-Kohlberg S."/>
            <person name="Kozlowicz-Reilly A."/>
            <person name="Shah N."/>
            <person name="Swearengen-Shahid S."/>
            <person name="Snider J."/>
            <person name="Strong J.T."/>
            <person name="Thompson J."/>
            <person name="Yoakum M."/>
            <person name="Leonard S."/>
            <person name="Pearman C."/>
            <person name="Trani L."/>
            <person name="Radionenko M."/>
            <person name="Waligorski J.E."/>
            <person name="Wang C."/>
            <person name="Rock S.M."/>
            <person name="Tin-Wollam A.-M."/>
            <person name="Maupin R."/>
            <person name="Latreille P."/>
            <person name="Wendl M.C."/>
            <person name="Yang S.-P."/>
            <person name="Pohl C."/>
            <person name="Wallis J.W."/>
            <person name="Spieth J."/>
            <person name="Bieri T.A."/>
            <person name="Berkowicz N."/>
            <person name="Nelson J.O."/>
            <person name="Osborne J."/>
            <person name="Ding L."/>
            <person name="Meyer R."/>
            <person name="Sabo A."/>
            <person name="Shotland Y."/>
            <person name="Sinha P."/>
            <person name="Wohldmann P.E."/>
            <person name="Cook L.L."/>
            <person name="Hickenbotham M.T."/>
            <person name="Eldred J."/>
            <person name="Williams D."/>
            <person name="Jones T.A."/>
            <person name="She X."/>
            <person name="Ciccarelli F.D."/>
            <person name="Izaurralde E."/>
            <person name="Taylor J."/>
            <person name="Schmutz J."/>
            <person name="Myers R.M."/>
            <person name="Cox D.R."/>
            <person name="Huang X."/>
            <person name="McPherson J.D."/>
            <person name="Mardis E.R."/>
            <person name="Clifton S.W."/>
            <person name="Warren W.C."/>
            <person name="Chinwalla A.T."/>
            <person name="Eddy S.R."/>
            <person name="Marra M.A."/>
            <person name="Ovcharenko I."/>
            <person name="Furey T.S."/>
            <person name="Miller W."/>
            <person name="Eichler E.E."/>
            <person name="Bork P."/>
            <person name="Suyama M."/>
            <person name="Torrents D."/>
            <person name="Waterston R.H."/>
            <person name="Wilson R.K."/>
        </authorList>
    </citation>
    <scope>NUCLEOTIDE SEQUENCE [LARGE SCALE GENOMIC DNA]</scope>
</reference>
<reference key="4">
    <citation type="journal article" date="2004" name="Genome Res.">
        <title>The status, quality, and expansion of the NIH full-length cDNA project: the Mammalian Gene Collection (MGC).</title>
        <authorList>
            <consortium name="The MGC Project Team"/>
        </authorList>
    </citation>
    <scope>NUCLEOTIDE SEQUENCE [LARGE SCALE MRNA] OF 14-219</scope>
    <scope>VARIANT THR-141</scope>
    <source>
        <tissue>Brain</tissue>
    </source>
</reference>
<reference key="5">
    <citation type="journal article" date="2008" name="Am. J. Hum. Genet.">
        <title>Transcription factor FIGLA is mutated in patients with premature ovarian failure.</title>
        <authorList>
            <person name="Zhao H."/>
            <person name="Chen Z.-J."/>
            <person name="Qin Y."/>
            <person name="Shi Y."/>
            <person name="Wang S."/>
            <person name="Choi Y."/>
            <person name="Simpson J.L."/>
            <person name="Rajkovic A."/>
        </authorList>
    </citation>
    <scope>VARIANT POF6 ASN-140 DEL</scope>
    <scope>VARIANT GLU-4</scope>
</reference>
<sequence>MDPAPGVLDPRAAPPALLGTPQAEVLEDVLREQFGPLPQLAAVCRLKRLPSGGYSSTENLQLVLERRRVANAKERERIKNLNRGFARLKALVPFLPQSRKPSKVDILKGATEYIQVLSDLLEGAKDSKKQDPDEQSYSNNSSESHTSSARQLSRNITQHISCAFGLKNEEEGPWADGGSGEPAHACRHSVMSTTEIISPTRSLDRFPEVELLSHRLPQV</sequence>
<protein>
    <recommendedName>
        <fullName>Factor in the germline alpha</fullName>
        <shortName>FIGalpha</shortName>
    </recommendedName>
    <alternativeName>
        <fullName>Class C basic helix-loop-helix protein 8</fullName>
        <shortName>bHLHc8</shortName>
    </alternativeName>
    <alternativeName>
        <fullName>Folliculogenesis-specific basic helix-loop-helix protein</fullName>
    </alternativeName>
    <alternativeName>
        <fullName>Transcription factor FIGa</fullName>
    </alternativeName>
</protein>
<organism>
    <name type="scientific">Homo sapiens</name>
    <name type="common">Human</name>
    <dbReference type="NCBI Taxonomy" id="9606"/>
    <lineage>
        <taxon>Eukaryota</taxon>
        <taxon>Metazoa</taxon>
        <taxon>Chordata</taxon>
        <taxon>Craniata</taxon>
        <taxon>Vertebrata</taxon>
        <taxon>Euteleostomi</taxon>
        <taxon>Mammalia</taxon>
        <taxon>Eutheria</taxon>
        <taxon>Euarchontoglires</taxon>
        <taxon>Primates</taxon>
        <taxon>Haplorrhini</taxon>
        <taxon>Catarrhini</taxon>
        <taxon>Hominidae</taxon>
        <taxon>Homo</taxon>
    </lineage>
</organism>
<gene>
    <name type="primary">FIGLA</name>
    <name type="synonym">BHLHC8</name>
</gene>
<accession>Q6QHK4</accession>
<evidence type="ECO:0000255" key="1">
    <source>
        <dbReference type="PROSITE-ProRule" id="PRU00981"/>
    </source>
</evidence>
<evidence type="ECO:0000256" key="2">
    <source>
        <dbReference type="SAM" id="MobiDB-lite"/>
    </source>
</evidence>
<evidence type="ECO:0000269" key="3">
    <source>
    </source>
</evidence>
<evidence type="ECO:0000269" key="4">
    <source>
    </source>
</evidence>
<evidence type="ECO:0000269" key="5">
    <source>
    </source>
</evidence>
<evidence type="ECO:0000269" key="6">
    <source>
    </source>
</evidence>
<evidence type="ECO:0000305" key="7"/>
<feature type="chain" id="PRO_0000127179" description="Factor in the germline alpha">
    <location>
        <begin position="1"/>
        <end position="219"/>
    </location>
</feature>
<feature type="domain" description="bHLH" evidence="1">
    <location>
        <begin position="65"/>
        <end position="117"/>
    </location>
</feature>
<feature type="region of interest" description="Disordered" evidence="2">
    <location>
        <begin position="124"/>
        <end position="151"/>
    </location>
</feature>
<feature type="compositionally biased region" description="Low complexity" evidence="2">
    <location>
        <begin position="136"/>
        <end position="148"/>
    </location>
</feature>
<feature type="sequence variant" id="VAR_046776" description="In dbSNP:rs71647803." evidence="6">
    <original>A</original>
    <variation>E</variation>
    <location>
        <position position="4"/>
    </location>
</feature>
<feature type="sequence variant" id="VAR_046777" description="In POF6; one individual with premature ovarian failure." evidence="6">
    <location>
        <position position="140"/>
    </location>
</feature>
<feature type="sequence variant" id="VAR_046778" description="In dbSNP:rs7566476." evidence="4 5">
    <original>S</original>
    <variation>T</variation>
    <location>
        <position position="141"/>
    </location>
</feature>